<dbReference type="EC" id="4.2.1.6" evidence="2"/>
<dbReference type="EMBL" id="FM200053">
    <property type="protein sequence ID" value="CAR61707.1"/>
    <property type="molecule type" value="Genomic_DNA"/>
</dbReference>
<dbReference type="RefSeq" id="WP_000704737.1">
    <property type="nucleotide sequence ID" value="NC_011147.1"/>
</dbReference>
<dbReference type="SMR" id="B5BIK9"/>
<dbReference type="KEGG" id="sek:SSPA3433a"/>
<dbReference type="HOGENOM" id="CLU_030273_3_2_6"/>
<dbReference type="UniPathway" id="UPA00081">
    <property type="reaction ID" value="UER00518"/>
</dbReference>
<dbReference type="Proteomes" id="UP000001869">
    <property type="component" value="Chromosome"/>
</dbReference>
<dbReference type="GO" id="GO:0008869">
    <property type="term" value="F:galactonate dehydratase activity"/>
    <property type="evidence" value="ECO:0007669"/>
    <property type="project" value="UniProtKB-UniRule"/>
</dbReference>
<dbReference type="GO" id="GO:0000287">
    <property type="term" value="F:magnesium ion binding"/>
    <property type="evidence" value="ECO:0007669"/>
    <property type="project" value="UniProtKB-UniRule"/>
</dbReference>
<dbReference type="GO" id="GO:0009063">
    <property type="term" value="P:amino acid catabolic process"/>
    <property type="evidence" value="ECO:0007669"/>
    <property type="project" value="InterPro"/>
</dbReference>
<dbReference type="GO" id="GO:0034194">
    <property type="term" value="P:D-galactonate catabolic process"/>
    <property type="evidence" value="ECO:0007669"/>
    <property type="project" value="UniProtKB-UniRule"/>
</dbReference>
<dbReference type="CDD" id="cd03325">
    <property type="entry name" value="D-galactonate_dehydratase"/>
    <property type="match status" value="1"/>
</dbReference>
<dbReference type="FunFam" id="3.20.20.120:FF:000008">
    <property type="entry name" value="D-galactonate dehydratase"/>
    <property type="match status" value="1"/>
</dbReference>
<dbReference type="FunFam" id="3.30.390.10:FF:000003">
    <property type="entry name" value="D-galactonate dehydratase"/>
    <property type="match status" value="1"/>
</dbReference>
<dbReference type="Gene3D" id="3.20.20.120">
    <property type="entry name" value="Enolase-like C-terminal domain"/>
    <property type="match status" value="1"/>
</dbReference>
<dbReference type="Gene3D" id="3.30.390.10">
    <property type="entry name" value="Enolase-like, N-terminal domain"/>
    <property type="match status" value="1"/>
</dbReference>
<dbReference type="HAMAP" id="MF_01289">
    <property type="entry name" value="Galacton_dehydrat"/>
    <property type="match status" value="1"/>
</dbReference>
<dbReference type="InterPro" id="IPR034593">
    <property type="entry name" value="DgoD-like"/>
</dbReference>
<dbReference type="InterPro" id="IPR036849">
    <property type="entry name" value="Enolase-like_C_sf"/>
</dbReference>
<dbReference type="InterPro" id="IPR029017">
    <property type="entry name" value="Enolase-like_N"/>
</dbReference>
<dbReference type="InterPro" id="IPR029065">
    <property type="entry name" value="Enolase_C-like"/>
</dbReference>
<dbReference type="InterPro" id="IPR023592">
    <property type="entry name" value="Galactonate_deHydtase"/>
</dbReference>
<dbReference type="InterPro" id="IPR018110">
    <property type="entry name" value="Mandel_Rmase/mucon_lact_enz_CS"/>
</dbReference>
<dbReference type="InterPro" id="IPR013342">
    <property type="entry name" value="Mandelate_racemase_C"/>
</dbReference>
<dbReference type="InterPro" id="IPR013341">
    <property type="entry name" value="Mandelate_racemase_N_dom"/>
</dbReference>
<dbReference type="NCBIfam" id="NF010624">
    <property type="entry name" value="PRK14017.1"/>
    <property type="match status" value="1"/>
</dbReference>
<dbReference type="PANTHER" id="PTHR48080:SF2">
    <property type="entry name" value="D-GALACTONATE DEHYDRATASE"/>
    <property type="match status" value="1"/>
</dbReference>
<dbReference type="PANTHER" id="PTHR48080">
    <property type="entry name" value="D-GALACTONATE DEHYDRATASE-RELATED"/>
    <property type="match status" value="1"/>
</dbReference>
<dbReference type="Pfam" id="PF13378">
    <property type="entry name" value="MR_MLE_C"/>
    <property type="match status" value="1"/>
</dbReference>
<dbReference type="Pfam" id="PF02746">
    <property type="entry name" value="MR_MLE_N"/>
    <property type="match status" value="1"/>
</dbReference>
<dbReference type="SFLD" id="SFLDF00003">
    <property type="entry name" value="D-galactonate_dehydratase"/>
    <property type="match status" value="1"/>
</dbReference>
<dbReference type="SFLD" id="SFLDS00001">
    <property type="entry name" value="Enolase"/>
    <property type="match status" value="1"/>
</dbReference>
<dbReference type="SMART" id="SM00922">
    <property type="entry name" value="MR_MLE"/>
    <property type="match status" value="1"/>
</dbReference>
<dbReference type="SUPFAM" id="SSF51604">
    <property type="entry name" value="Enolase C-terminal domain-like"/>
    <property type="match status" value="1"/>
</dbReference>
<dbReference type="SUPFAM" id="SSF54826">
    <property type="entry name" value="Enolase N-terminal domain-like"/>
    <property type="match status" value="1"/>
</dbReference>
<dbReference type="PROSITE" id="PS00908">
    <property type="entry name" value="MR_MLE_1"/>
    <property type="match status" value="1"/>
</dbReference>
<dbReference type="PROSITE" id="PS00909">
    <property type="entry name" value="MR_MLE_2"/>
    <property type="match status" value="1"/>
</dbReference>
<accession>B5BIK9</accession>
<keyword id="KW-0456">Lyase</keyword>
<keyword id="KW-0460">Magnesium</keyword>
<keyword id="KW-0479">Metal-binding</keyword>
<evidence type="ECO:0000250" key="1"/>
<evidence type="ECO:0000255" key="2">
    <source>
        <dbReference type="HAMAP-Rule" id="MF_01289"/>
    </source>
</evidence>
<feature type="chain" id="PRO_1000140391" description="D-galactonate dehydratase">
    <location>
        <begin position="1"/>
        <end position="382"/>
    </location>
</feature>
<feature type="active site" description="Proton donor" evidence="1">
    <location>
        <position position="185"/>
    </location>
</feature>
<feature type="active site" description="Proton acceptor" evidence="1">
    <location>
        <position position="285"/>
    </location>
</feature>
<feature type="binding site" evidence="2">
    <location>
        <position position="183"/>
    </location>
    <ligand>
        <name>Mg(2+)</name>
        <dbReference type="ChEBI" id="CHEBI:18420"/>
    </ligand>
</feature>
<feature type="binding site" evidence="2">
    <location>
        <position position="209"/>
    </location>
    <ligand>
        <name>Mg(2+)</name>
        <dbReference type="ChEBI" id="CHEBI:18420"/>
    </ligand>
</feature>
<feature type="binding site" evidence="2">
    <location>
        <position position="235"/>
    </location>
    <ligand>
        <name>Mg(2+)</name>
        <dbReference type="ChEBI" id="CHEBI:18420"/>
    </ligand>
</feature>
<feature type="site" description="Increases basicity of active site His" evidence="2">
    <location>
        <position position="258"/>
    </location>
</feature>
<feature type="site" description="Transition state stabilizer" evidence="2">
    <location>
        <position position="310"/>
    </location>
</feature>
<organism>
    <name type="scientific">Salmonella paratyphi A (strain AKU_12601)</name>
    <dbReference type="NCBI Taxonomy" id="554290"/>
    <lineage>
        <taxon>Bacteria</taxon>
        <taxon>Pseudomonadati</taxon>
        <taxon>Pseudomonadota</taxon>
        <taxon>Gammaproteobacteria</taxon>
        <taxon>Enterobacterales</taxon>
        <taxon>Enterobacteriaceae</taxon>
        <taxon>Salmonella</taxon>
    </lineage>
</organism>
<name>DGOD_SALPK</name>
<proteinExistence type="inferred from homology"/>
<sequence>MKITHITTYRLPPRWMFLKIETDEGVVGWGEPVIEGRARTVEAAVHEFADYLIGKDPARINDLWQVMYRAGFYRGGPIMMSAIAGIDQALWDIKGKVLNAPVWQLMGGLVRDKIKAYSWVGGDRPADVIDGIEKLRGIGFDTFKLNGCEEMGVIDNSRAVDAAVNTVAQIREAFGSEIEFGLDFHGRVSAPMAKVLIKELEPYRPLFIEEPVLAEQAEYYPRLAAQTHIPIAAGERMFSRFEFKRVLDAGGLGILQPDLSHAGGITECYKIAGMAEAYDVALAPHCPLGPIALAACLHIDFVSRNAVFQEQSMGIHYNKGAELLDFVKNKEDFSMDGGFFKPLTKPGLGVDIDEARVIELSKSAPDWSNPLWRHADGSVAEW</sequence>
<reference key="1">
    <citation type="journal article" date="2009" name="BMC Genomics">
        <title>Pseudogene accumulation in the evolutionary histories of Salmonella enterica serovars Paratyphi A and Typhi.</title>
        <authorList>
            <person name="Holt K.E."/>
            <person name="Thomson N.R."/>
            <person name="Wain J."/>
            <person name="Langridge G.C."/>
            <person name="Hasan R."/>
            <person name="Bhutta Z.A."/>
            <person name="Quail M.A."/>
            <person name="Norbertczak H."/>
            <person name="Walker D."/>
            <person name="Simmonds M."/>
            <person name="White B."/>
            <person name="Bason N."/>
            <person name="Mungall K."/>
            <person name="Dougan G."/>
            <person name="Parkhill J."/>
        </authorList>
    </citation>
    <scope>NUCLEOTIDE SEQUENCE [LARGE SCALE GENOMIC DNA]</scope>
    <source>
        <strain>AKU_12601</strain>
    </source>
</reference>
<gene>
    <name evidence="2" type="primary">dgoD</name>
    <name type="ordered locus">SSPA3433.1</name>
    <name type="ORF">SSPA3433a</name>
</gene>
<comment type="function">
    <text evidence="2">Catalyzes the dehydration of D-galactonate to 2-keto-3-deoxy-D-galactonate.</text>
</comment>
<comment type="catalytic activity">
    <reaction evidence="2">
        <text>D-galactonate = 2-dehydro-3-deoxy-D-galactonate + H2O</text>
        <dbReference type="Rhea" id="RHEA:18649"/>
        <dbReference type="ChEBI" id="CHEBI:12931"/>
        <dbReference type="ChEBI" id="CHEBI:15377"/>
        <dbReference type="ChEBI" id="CHEBI:57989"/>
        <dbReference type="EC" id="4.2.1.6"/>
    </reaction>
</comment>
<comment type="cofactor">
    <cofactor evidence="2">
        <name>Mg(2+)</name>
        <dbReference type="ChEBI" id="CHEBI:18420"/>
    </cofactor>
    <text evidence="2">Binds 1 Mg(2+) ion per subunit.</text>
</comment>
<comment type="pathway">
    <text evidence="2">Carbohydrate acid metabolism; D-galactonate degradation; D-glyceraldehyde 3-phosphate and pyruvate from D-galactonate: step 1/3.</text>
</comment>
<comment type="miscellaneous">
    <text evidence="2">Reaction proceeds via an anti dehydration.</text>
</comment>
<comment type="similarity">
    <text evidence="2">Belongs to the mandelate racemase/muconate lactonizing enzyme family. GalD subfamily.</text>
</comment>
<protein>
    <recommendedName>
        <fullName evidence="2">D-galactonate dehydratase</fullName>
        <shortName evidence="2">GalD</shortName>
        <ecNumber evidence="2">4.2.1.6</ecNumber>
    </recommendedName>
</protein>